<reference key="1">
    <citation type="journal article" date="2004" name="Nature">
        <title>The DNA sequence and biology of human chromosome 19.</title>
        <authorList>
            <person name="Grimwood J."/>
            <person name="Gordon L.A."/>
            <person name="Olsen A.S."/>
            <person name="Terry A."/>
            <person name="Schmutz J."/>
            <person name="Lamerdin J.E."/>
            <person name="Hellsten U."/>
            <person name="Goodstein D."/>
            <person name="Couronne O."/>
            <person name="Tran-Gyamfi M."/>
            <person name="Aerts A."/>
            <person name="Altherr M."/>
            <person name="Ashworth L."/>
            <person name="Bajorek E."/>
            <person name="Black S."/>
            <person name="Branscomb E."/>
            <person name="Caenepeel S."/>
            <person name="Carrano A.V."/>
            <person name="Caoile C."/>
            <person name="Chan Y.M."/>
            <person name="Christensen M."/>
            <person name="Cleland C.A."/>
            <person name="Copeland A."/>
            <person name="Dalin E."/>
            <person name="Dehal P."/>
            <person name="Denys M."/>
            <person name="Detter J.C."/>
            <person name="Escobar J."/>
            <person name="Flowers D."/>
            <person name="Fotopulos D."/>
            <person name="Garcia C."/>
            <person name="Georgescu A.M."/>
            <person name="Glavina T."/>
            <person name="Gomez M."/>
            <person name="Gonzales E."/>
            <person name="Groza M."/>
            <person name="Hammon N."/>
            <person name="Hawkins T."/>
            <person name="Haydu L."/>
            <person name="Ho I."/>
            <person name="Huang W."/>
            <person name="Israni S."/>
            <person name="Jett J."/>
            <person name="Kadner K."/>
            <person name="Kimball H."/>
            <person name="Kobayashi A."/>
            <person name="Larionov V."/>
            <person name="Leem S.-H."/>
            <person name="Lopez F."/>
            <person name="Lou Y."/>
            <person name="Lowry S."/>
            <person name="Malfatti S."/>
            <person name="Martinez D."/>
            <person name="McCready P.M."/>
            <person name="Medina C."/>
            <person name="Morgan J."/>
            <person name="Nelson K."/>
            <person name="Nolan M."/>
            <person name="Ovcharenko I."/>
            <person name="Pitluck S."/>
            <person name="Pollard M."/>
            <person name="Popkie A.P."/>
            <person name="Predki P."/>
            <person name="Quan G."/>
            <person name="Ramirez L."/>
            <person name="Rash S."/>
            <person name="Retterer J."/>
            <person name="Rodriguez A."/>
            <person name="Rogers S."/>
            <person name="Salamov A."/>
            <person name="Salazar A."/>
            <person name="She X."/>
            <person name="Smith D."/>
            <person name="Slezak T."/>
            <person name="Solovyev V."/>
            <person name="Thayer N."/>
            <person name="Tice H."/>
            <person name="Tsai M."/>
            <person name="Ustaszewska A."/>
            <person name="Vo N."/>
            <person name="Wagner M."/>
            <person name="Wheeler J."/>
            <person name="Wu K."/>
            <person name="Xie G."/>
            <person name="Yang J."/>
            <person name="Dubchak I."/>
            <person name="Furey T.S."/>
            <person name="DeJong P."/>
            <person name="Dickson M."/>
            <person name="Gordon D."/>
            <person name="Eichler E.E."/>
            <person name="Pennacchio L.A."/>
            <person name="Richardson P."/>
            <person name="Stubbs L."/>
            <person name="Rokhsar D.S."/>
            <person name="Myers R.M."/>
            <person name="Rubin E.M."/>
            <person name="Lucas S.M."/>
        </authorList>
    </citation>
    <scope>NUCLEOTIDE SEQUENCE [LARGE SCALE GENOMIC DNA] (ISOFORM 1)</scope>
</reference>
<reference key="2">
    <citation type="journal article" date="2004" name="Genome Res.">
        <title>The status, quality, and expansion of the NIH full-length cDNA project: the Mammalian Gene Collection (MGC).</title>
        <authorList>
            <consortium name="The MGC Project Team"/>
        </authorList>
    </citation>
    <scope>NUCLEOTIDE SEQUENCE [LARGE SCALE MRNA] (ISOFORM 2)</scope>
    <source>
        <tissue>Brain</tissue>
    </source>
</reference>
<reference key="3">
    <citation type="journal article" date="2006" name="Cell">
        <title>Global, in vivo, and site-specific phosphorylation dynamics in signaling networks.</title>
        <authorList>
            <person name="Olsen J.V."/>
            <person name="Blagoev B."/>
            <person name="Gnad F."/>
            <person name="Macek B."/>
            <person name="Kumar C."/>
            <person name="Mortensen P."/>
            <person name="Mann M."/>
        </authorList>
    </citation>
    <scope>PHOSPHORYLATION [LARGE SCALE ANALYSIS] AT SER-528 AND SER-703</scope>
    <scope>IDENTIFICATION BY MASS SPECTROMETRY [LARGE SCALE ANALYSIS]</scope>
    <source>
        <tissue>Cervix carcinoma</tissue>
    </source>
</reference>
<reference key="4">
    <citation type="journal article" date="2008" name="Proc. Natl. Acad. Sci. U.S.A.">
        <title>A quantitative atlas of mitotic phosphorylation.</title>
        <authorList>
            <person name="Dephoure N."/>
            <person name="Zhou C."/>
            <person name="Villen J."/>
            <person name="Beausoleil S.A."/>
            <person name="Bakalarski C.E."/>
            <person name="Elledge S.J."/>
            <person name="Gygi S.P."/>
        </authorList>
    </citation>
    <scope>PHOSPHORYLATION [LARGE SCALE ANALYSIS] AT SER-299; SER-304 AND SER-703</scope>
    <scope>IDENTIFICATION BY MASS SPECTROMETRY [LARGE SCALE ANALYSIS]</scope>
    <source>
        <tissue>Cervix carcinoma</tissue>
    </source>
</reference>
<reference key="5">
    <citation type="journal article" date="2010" name="Sci. Signal.">
        <title>Quantitative phosphoproteomics reveals widespread full phosphorylation site occupancy during mitosis.</title>
        <authorList>
            <person name="Olsen J.V."/>
            <person name="Vermeulen M."/>
            <person name="Santamaria A."/>
            <person name="Kumar C."/>
            <person name="Miller M.L."/>
            <person name="Jensen L.J."/>
            <person name="Gnad F."/>
            <person name="Cox J."/>
            <person name="Jensen T.S."/>
            <person name="Nigg E.A."/>
            <person name="Brunak S."/>
            <person name="Mann M."/>
        </authorList>
    </citation>
    <scope>PHOSPHORYLATION [LARGE SCALE ANALYSIS] AT THR-698; SER-699 AND SER-703</scope>
    <scope>IDENTIFICATION BY MASS SPECTROMETRY [LARGE SCALE ANALYSIS]</scope>
    <source>
        <tissue>Cervix carcinoma</tissue>
    </source>
</reference>
<reference key="6">
    <citation type="journal article" date="2011" name="Sci. Signal.">
        <title>System-wide temporal characterization of the proteome and phosphoproteome of human embryonic stem cell differentiation.</title>
        <authorList>
            <person name="Rigbolt K.T."/>
            <person name="Prokhorova T.A."/>
            <person name="Akimov V."/>
            <person name="Henningsen J."/>
            <person name="Johansen P.T."/>
            <person name="Kratchmarova I."/>
            <person name="Kassem M."/>
            <person name="Mann M."/>
            <person name="Olsen J.V."/>
            <person name="Blagoev B."/>
        </authorList>
    </citation>
    <scope>PHOSPHORYLATION [LARGE SCALE ANALYSIS] AT SER-299</scope>
    <scope>IDENTIFICATION BY MASS SPECTROMETRY [LARGE SCALE ANALYSIS]</scope>
</reference>
<reference key="7">
    <citation type="journal article" date="2013" name="J. Proteome Res.">
        <title>Toward a comprehensive characterization of a human cancer cell phosphoproteome.</title>
        <authorList>
            <person name="Zhou H."/>
            <person name="Di Palma S."/>
            <person name="Preisinger C."/>
            <person name="Peng M."/>
            <person name="Polat A.N."/>
            <person name="Heck A.J."/>
            <person name="Mohammed S."/>
        </authorList>
    </citation>
    <scope>PHOSPHORYLATION [LARGE SCALE ANALYSIS] AT SER-299; SER-507 AND SER-528</scope>
    <scope>IDENTIFICATION BY MASS SPECTROMETRY [LARGE SCALE ANALYSIS]</scope>
    <source>
        <tissue>Cervix carcinoma</tissue>
        <tissue>Erythroleukemia</tissue>
    </source>
</reference>
<evidence type="ECO:0000250" key="1">
    <source>
        <dbReference type="UniProtKB" id="Q66L44"/>
    </source>
</evidence>
<evidence type="ECO:0000255" key="2"/>
<evidence type="ECO:0000256" key="3">
    <source>
        <dbReference type="SAM" id="MobiDB-lite"/>
    </source>
</evidence>
<evidence type="ECO:0000303" key="4">
    <source>
    </source>
</evidence>
<evidence type="ECO:0000305" key="5"/>
<evidence type="ECO:0000312" key="6">
    <source>
        <dbReference type="HGNC" id="HGNC:28617"/>
    </source>
</evidence>
<evidence type="ECO:0007744" key="7">
    <source>
    </source>
</evidence>
<evidence type="ECO:0007744" key="8">
    <source>
    </source>
</evidence>
<evidence type="ECO:0007744" key="9">
    <source>
    </source>
</evidence>
<evidence type="ECO:0007744" key="10">
    <source>
    </source>
</evidence>
<evidence type="ECO:0007744" key="11">
    <source>
    </source>
</evidence>
<protein>
    <recommendedName>
        <fullName evidence="5">Voltage-dependent calcium channel beta subunit-associated regulatory protein</fullName>
    </recommendedName>
</protein>
<sequence length="705" mass="73929">MQPTATMATAATTTTTTTATVALTTSWDNATGRPTAEPDPILDNYVLLVVVMSLFVGGTLVVLSGVLLLCKRCWDVHQRLNRAMEEAEKTTTTYLDNGTHPAQDPDFRGEDPECQDAETERFLSTSSTGRRVSFNEAALFEQSRKTQDKGRRYTLTEGDFHHLKNARLTHLHLPPLKIVTIHECDSGEASSATTPHPATSPKATLAIFQPPGKALTGRSVGPSSALPGDPYNSAAGATDFAEISPSASSDSGEGTSLDAGTRSTKAGGPGAAAGPGEAGPGSGAGTVLQFLTRLRRHASLDGASPYFKVKKWKLEPSQRAASLDTRGSPKRHHFQRQRAASESTEQEEGDAPQEDFIQYIARAGDAVAFPHPRPFLASPPPALGRLEAAEAAGGASPDSPPERGAGSAGPEQQQPPLEPDAERDAGPEQAQTSYRDLWSLRASLELHAAASDHSSSGNDRDSVRSGDSSGSGSGGAAPAFPPPSPPAPRPKDGEARRLLQMDSGYASIEGRGAGDDTEPPAAPARPRSPRAWPRRPRRDYSIDEKTDALFHEFLRHDPHFDDTPAAARHRARAHPHARKQWQRGRQHSDPGARAAPALAGTPAPPAGAARPARAPLRRGDSVDGPPDGRTLGGAGDDPAIPVIEEEPGGGGCPGSGLCVLPSGSVLDKLAAGLDERLFPPRLAEPVVATPALVAAAPTSPDHSPA</sequence>
<keyword id="KW-0025">Alternative splicing</keyword>
<keyword id="KW-1003">Cell membrane</keyword>
<keyword id="KW-0966">Cell projection</keyword>
<keyword id="KW-0968">Cytoplasmic vesicle</keyword>
<keyword id="KW-0325">Glycoprotein</keyword>
<keyword id="KW-0472">Membrane</keyword>
<keyword id="KW-0597">Phosphoprotein</keyword>
<keyword id="KW-1267">Proteomics identification</keyword>
<keyword id="KW-1185">Reference proteome</keyword>
<keyword id="KW-0770">Synapse</keyword>
<keyword id="KW-0812">Transmembrane</keyword>
<keyword id="KW-1133">Transmembrane helix</keyword>
<dbReference type="EMBL" id="AC004221">
    <property type="protein sequence ID" value="AAC04305.1"/>
    <property type="status" value="ALT_SEQ"/>
    <property type="molecule type" value="Genomic_DNA"/>
</dbReference>
<dbReference type="EMBL" id="BC028156">
    <property type="protein sequence ID" value="AAH28156.1"/>
    <property type="status" value="ALT_INIT"/>
    <property type="molecule type" value="mRNA"/>
</dbReference>
<dbReference type="CCDS" id="CCDS12057.2">
    <molecule id="Q8N350-4"/>
</dbReference>
<dbReference type="CCDS" id="CCDS92477.1">
    <molecule id="Q8N350-3"/>
</dbReference>
<dbReference type="PIR" id="T00492">
    <property type="entry name" value="T00492"/>
</dbReference>
<dbReference type="RefSeq" id="NP_001380847.1">
    <molecule id="Q8N350-3"/>
    <property type="nucleotide sequence ID" value="NM_001393918.1"/>
</dbReference>
<dbReference type="RefSeq" id="NP_689982.3">
    <molecule id="Q8N350-4"/>
    <property type="nucleotide sequence ID" value="NM_152769.3"/>
</dbReference>
<dbReference type="SMR" id="Q8N350"/>
<dbReference type="BioGRID" id="129072">
    <property type="interactions" value="94"/>
</dbReference>
<dbReference type="FunCoup" id="Q8N350">
    <property type="interactions" value="472"/>
</dbReference>
<dbReference type="IntAct" id="Q8N350">
    <property type="interactions" value="39"/>
</dbReference>
<dbReference type="MINT" id="Q8N350"/>
<dbReference type="STRING" id="9606.ENSP00000465260"/>
<dbReference type="GlyCosmos" id="Q8N350">
    <property type="glycosylation" value="1 site, No reported glycans"/>
</dbReference>
<dbReference type="GlyGen" id="Q8N350">
    <property type="glycosylation" value="3 sites"/>
</dbReference>
<dbReference type="iPTMnet" id="Q8N350"/>
<dbReference type="PhosphoSitePlus" id="Q8N350"/>
<dbReference type="BioMuta" id="CBARP"/>
<dbReference type="DMDM" id="73919246"/>
<dbReference type="jPOST" id="Q8N350"/>
<dbReference type="MassIVE" id="Q8N350"/>
<dbReference type="PaxDb" id="9606-ENSP00000465260"/>
<dbReference type="PeptideAtlas" id="Q8N350"/>
<dbReference type="Antibodypedia" id="2282">
    <property type="antibodies" value="61 antibodies from 17 providers"/>
</dbReference>
<dbReference type="DNASU" id="255057"/>
<dbReference type="Ensembl" id="ENST00000590083.5">
    <molecule id="Q8N350-4"/>
    <property type="protein sequence ID" value="ENSP00000465260.1"/>
    <property type="gene ID" value="ENSG00000099625.14"/>
</dbReference>
<dbReference type="Ensembl" id="ENST00000650044.2">
    <molecule id="Q8N350-3"/>
    <property type="protein sequence ID" value="ENSP00000497208.1"/>
    <property type="gene ID" value="ENSG00000099625.14"/>
</dbReference>
<dbReference type="GeneID" id="255057"/>
<dbReference type="KEGG" id="hsa:255057"/>
<dbReference type="MANE-Select" id="ENST00000650044.2">
    <property type="protein sequence ID" value="ENSP00000497208.1"/>
    <property type="RefSeq nucleotide sequence ID" value="NM_001393918.1"/>
    <property type="RefSeq protein sequence ID" value="NP_001380847.1"/>
</dbReference>
<dbReference type="UCSC" id="uc002lrm.4">
    <property type="organism name" value="human"/>
</dbReference>
<dbReference type="UCSC" id="uc060qwp.1">
    <molecule id="Q8N350-3"/>
    <property type="organism name" value="human"/>
</dbReference>
<dbReference type="AGR" id="HGNC:28617"/>
<dbReference type="CTD" id="255057"/>
<dbReference type="DisGeNET" id="255057"/>
<dbReference type="GeneCards" id="CBARP"/>
<dbReference type="HGNC" id="HGNC:28617">
    <property type="gene designation" value="CBARP"/>
</dbReference>
<dbReference type="HPA" id="ENSG00000099625">
    <property type="expression patterns" value="Tissue enhanced (brain, pituitary gland)"/>
</dbReference>
<dbReference type="neXtProt" id="NX_Q8N350"/>
<dbReference type="OpenTargets" id="ENSG00000099625"/>
<dbReference type="PharmGKB" id="PA134919853"/>
<dbReference type="VEuPathDB" id="HostDB:ENSG00000099625"/>
<dbReference type="eggNOG" id="ENOG502QQ2E">
    <property type="taxonomic scope" value="Eukaryota"/>
</dbReference>
<dbReference type="GeneTree" id="ENSGT00390000009230"/>
<dbReference type="HOGENOM" id="CLU_015082_2_0_1"/>
<dbReference type="InParanoid" id="Q8N350"/>
<dbReference type="OMA" id="PGVRHFH"/>
<dbReference type="OrthoDB" id="6247020at2759"/>
<dbReference type="PAN-GO" id="Q8N350">
    <property type="GO annotations" value="5 GO annotations based on evolutionary models"/>
</dbReference>
<dbReference type="TreeFam" id="TF331130"/>
<dbReference type="PathwayCommons" id="Q8N350"/>
<dbReference type="SignaLink" id="Q8N350"/>
<dbReference type="BioGRID-ORCS" id="255057">
    <property type="hits" value="17 hits in 1137 CRISPR screens"/>
</dbReference>
<dbReference type="GenomeRNAi" id="255057"/>
<dbReference type="Pharos" id="Q8N350">
    <property type="development level" value="Tbio"/>
</dbReference>
<dbReference type="PRO" id="PR:Q8N350"/>
<dbReference type="Proteomes" id="UP000005640">
    <property type="component" value="Chromosome 19"/>
</dbReference>
<dbReference type="RNAct" id="Q8N350">
    <property type="molecule type" value="protein"/>
</dbReference>
<dbReference type="Bgee" id="ENSG00000099625">
    <property type="expression patterns" value="Expressed in adenohypophysis and 129 other cell types or tissues"/>
</dbReference>
<dbReference type="ExpressionAtlas" id="Q8N350">
    <property type="expression patterns" value="baseline and differential"/>
</dbReference>
<dbReference type="GO" id="GO:0030426">
    <property type="term" value="C:growth cone"/>
    <property type="evidence" value="ECO:0007669"/>
    <property type="project" value="UniProtKB-SubCell"/>
</dbReference>
<dbReference type="GO" id="GO:0005886">
    <property type="term" value="C:plasma membrane"/>
    <property type="evidence" value="ECO:0000250"/>
    <property type="project" value="UniProtKB"/>
</dbReference>
<dbReference type="GO" id="GO:0030141">
    <property type="term" value="C:secretory granule"/>
    <property type="evidence" value="ECO:0000250"/>
    <property type="project" value="UniProtKB"/>
</dbReference>
<dbReference type="GO" id="GO:0030672">
    <property type="term" value="C:synaptic vesicle membrane"/>
    <property type="evidence" value="ECO:0007669"/>
    <property type="project" value="UniProtKB-SubCell"/>
</dbReference>
<dbReference type="GO" id="GO:0044325">
    <property type="term" value="F:transmembrane transporter binding"/>
    <property type="evidence" value="ECO:0000250"/>
    <property type="project" value="UniProtKB"/>
</dbReference>
<dbReference type="GO" id="GO:1903170">
    <property type="term" value="P:negative regulation of calcium ion transmembrane transport"/>
    <property type="evidence" value="ECO:0000250"/>
    <property type="project" value="UniProtKB"/>
</dbReference>
<dbReference type="GO" id="GO:0045955">
    <property type="term" value="P:negative regulation of calcium ion-dependent exocytosis"/>
    <property type="evidence" value="ECO:0000250"/>
    <property type="project" value="UniProtKB"/>
</dbReference>
<dbReference type="GO" id="GO:1901386">
    <property type="term" value="P:negative regulation of voltage-gated calcium channel activity"/>
    <property type="evidence" value="ECO:0000250"/>
    <property type="project" value="UniProtKB"/>
</dbReference>
<dbReference type="InterPro" id="IPR037658">
    <property type="entry name" value="CBARP"/>
</dbReference>
<dbReference type="PANTHER" id="PTHR28597">
    <property type="entry name" value="VOLTAGE-DEPENDENT CALCIUM CHANNEL BETA SUBUNIT-ASSOCIATED REGULATORY PROTEIN"/>
    <property type="match status" value="1"/>
</dbReference>
<dbReference type="PANTHER" id="PTHR28597:SF1">
    <property type="entry name" value="VOLTAGE-DEPENDENT CALCIUM CHANNEL BETA SUBUNIT-ASSOCIATED REGULATORY PROTEIN"/>
    <property type="match status" value="1"/>
</dbReference>
<gene>
    <name evidence="6" type="primary">CBARP</name>
    <name evidence="6" type="synonym">C19orf26</name>
</gene>
<name>CBARP_HUMAN</name>
<comment type="function">
    <text evidence="1">Negatively regulates voltage-gated calcium channels by preventing the interaction between their alpha and beta subunits. Thereby, negatively regulates calcium channels activity at the plasma membrane and indirectly inhibits calcium-regulated exocytosis.</text>
</comment>
<comment type="subunit">
    <text evidence="1">Interacts with voltage-dependent calcium channels CACNB1, CACNB2, CACNB3 and CACNB4 beta subunits; prevents their interaction with the CACNA1C alpha subunit thereby negatively regulating the activity of the corresponding calcium channels.</text>
</comment>
<comment type="interaction">
    <interactant intactId="EBI-9355611">
        <id>Q8N350</id>
    </interactant>
    <interactant intactId="EBI-9819324">
        <id>Q14849</id>
        <label>STARD3</label>
    </interactant>
    <organismsDiffer>false</organismsDiffer>
    <experiments>2</experiments>
</comment>
<comment type="interaction">
    <interactant intactId="EBI-19051169">
        <id>Q8N350-4</id>
    </interactant>
    <interactant intactId="EBI-348517">
        <id>O95870</id>
        <label>ABHD16A</label>
    </interactant>
    <organismsDiffer>false</organismsDiffer>
    <experiments>3</experiments>
</comment>
<comment type="interaction">
    <interactant intactId="EBI-19051169">
        <id>Q8N350-4</id>
    </interactant>
    <interactant intactId="EBI-12069500">
        <id>Q9HD20-3</id>
        <label>ATP13A1</label>
    </interactant>
    <organismsDiffer>false</organismsDiffer>
    <experiments>3</experiments>
</comment>
<comment type="interaction">
    <interactant intactId="EBI-19051169">
        <id>Q8N350-4</id>
    </interactant>
    <interactant intactId="EBI-19051471">
        <id>Q5R3K3</id>
        <label>CALHM6</label>
    </interactant>
    <organismsDiffer>false</organismsDiffer>
    <experiments>3</experiments>
</comment>
<comment type="interaction">
    <interactant intactId="EBI-19051169">
        <id>Q8N350-4</id>
    </interactant>
    <interactant intactId="EBI-3920969">
        <id>Q6N075</id>
        <label>MFSD5</label>
    </interactant>
    <organismsDiffer>false</organismsDiffer>
    <experiments>3</experiments>
</comment>
<comment type="interaction">
    <interactant intactId="EBI-19051169">
        <id>Q8N350-4</id>
    </interactant>
    <interactant intactId="EBI-12070086">
        <id>Q5J8X5</id>
        <label>MS4A13</label>
    </interactant>
    <organismsDiffer>false</organismsDiffer>
    <experiments>3</experiments>
</comment>
<comment type="interaction">
    <interactant intactId="EBI-19051169">
        <id>Q8N350-4</id>
    </interactant>
    <interactant intactId="EBI-713635">
        <id>O43639</id>
        <label>NCK2</label>
    </interactant>
    <organismsDiffer>false</organismsDiffer>
    <experiments>3</experiments>
</comment>
<comment type="interaction">
    <interactant intactId="EBI-19051169">
        <id>Q8N350-4</id>
    </interactant>
    <interactant intactId="EBI-18254170">
        <id>Q9H237-2</id>
        <label>PORCN</label>
    </interactant>
    <organismsDiffer>false</organismsDiffer>
    <experiments>3</experiments>
</comment>
<comment type="interaction">
    <interactant intactId="EBI-19051169">
        <id>Q8N350-4</id>
    </interactant>
    <interactant intactId="EBI-713484">
        <id>Q8N357</id>
        <label>SLC35F6</label>
    </interactant>
    <organismsDiffer>false</organismsDiffer>
    <experiments>3</experiments>
</comment>
<comment type="interaction">
    <interactant intactId="EBI-19051169">
        <id>Q8N350-4</id>
    </interactant>
    <interactant intactId="EBI-2823239">
        <id>Q9NUM3</id>
        <label>SLC39A9</label>
    </interactant>
    <organismsDiffer>false</organismsDiffer>
    <experiments>3</experiments>
</comment>
<comment type="interaction">
    <interactant intactId="EBI-19051169">
        <id>Q8N350-4</id>
    </interactant>
    <interactant intactId="EBI-765817">
        <id>Q9Y228</id>
        <label>TRAF3IP3</label>
    </interactant>
    <organismsDiffer>false</organismsDiffer>
    <experiments>3</experiments>
</comment>
<comment type="subcellular location">
    <subcellularLocation>
        <location evidence="1">Cytoplasmic vesicle</location>
        <location evidence="1">Secretory vesicle</location>
        <location evidence="1">Synaptic vesicle membrane</location>
        <topology evidence="1">Single-pass type III membrane protein</topology>
    </subcellularLocation>
    <subcellularLocation>
        <location evidence="1">Cell membrane</location>
        <topology evidence="1">Single-pass type III membrane protein</topology>
    </subcellularLocation>
    <subcellularLocation>
        <location evidence="1">Cell projection</location>
        <location evidence="1">Growth cone</location>
    </subcellularLocation>
</comment>
<comment type="alternative products">
    <event type="alternative splicing"/>
    <isoform>
        <id>Q8N350-3</id>
        <name>1</name>
        <sequence type="displayed"/>
    </isoform>
    <isoform>
        <id>Q8N350-4</id>
        <name>2</name>
        <sequence type="described" ref="VSP_058134 VSP_058135"/>
    </isoform>
</comment>
<comment type="sequence caution" evidence="5">
    <conflict type="erroneous gene model prediction">
        <sequence resource="EMBL-CDS" id="AAC04305"/>
    </conflict>
</comment>
<comment type="sequence caution" evidence="5">
    <conflict type="erroneous initiation">
        <sequence resource="EMBL-CDS" id="AAH28156"/>
    </conflict>
    <text>Truncated N-terminus.</text>
</comment>
<proteinExistence type="evidence at protein level"/>
<accession>Q8N350</accession>
<accession>K7EJP2</accession>
<accession>O43385</accession>
<feature type="chain" id="PRO_0000079983" description="Voltage-dependent calcium channel beta subunit-associated regulatory protein">
    <location>
        <begin position="1"/>
        <end position="705"/>
    </location>
</feature>
<feature type="topological domain" description="Extracellular" evidence="1">
    <location>
        <begin position="1"/>
        <end position="45"/>
    </location>
</feature>
<feature type="transmembrane region" description="Helical; Signal-anchor for type III membrane protein" evidence="2">
    <location>
        <begin position="46"/>
        <end position="66"/>
    </location>
</feature>
<feature type="topological domain" description="Cytoplasmic" evidence="1">
    <location>
        <begin position="67"/>
        <end position="705"/>
    </location>
</feature>
<feature type="region of interest" description="Disordered" evidence="3">
    <location>
        <begin position="91"/>
        <end position="113"/>
    </location>
</feature>
<feature type="region of interest" description="Disordered" evidence="3">
    <location>
        <begin position="212"/>
        <end position="284"/>
    </location>
</feature>
<feature type="region of interest" description="Disordered" evidence="3">
    <location>
        <begin position="316"/>
        <end position="353"/>
    </location>
</feature>
<feature type="region of interest" description="Disordered" evidence="3">
    <location>
        <begin position="369"/>
        <end position="436"/>
    </location>
</feature>
<feature type="region of interest" description="Disordered" evidence="3">
    <location>
        <begin position="448"/>
        <end position="540"/>
    </location>
</feature>
<feature type="region of interest" description="Disordered" evidence="3">
    <location>
        <begin position="559"/>
        <end position="655"/>
    </location>
</feature>
<feature type="compositionally biased region" description="Polar residues" evidence="3">
    <location>
        <begin position="245"/>
        <end position="254"/>
    </location>
</feature>
<feature type="compositionally biased region" description="Gly residues" evidence="3">
    <location>
        <begin position="267"/>
        <end position="284"/>
    </location>
</feature>
<feature type="compositionally biased region" description="Acidic residues" evidence="3">
    <location>
        <begin position="344"/>
        <end position="353"/>
    </location>
</feature>
<feature type="compositionally biased region" description="Pro residues" evidence="3">
    <location>
        <begin position="371"/>
        <end position="382"/>
    </location>
</feature>
<feature type="compositionally biased region" description="Low complexity" evidence="3">
    <location>
        <begin position="383"/>
        <end position="397"/>
    </location>
</feature>
<feature type="compositionally biased region" description="Pro residues" evidence="3">
    <location>
        <begin position="479"/>
        <end position="488"/>
    </location>
</feature>
<feature type="compositionally biased region" description="Basic and acidic residues" evidence="3">
    <location>
        <begin position="489"/>
        <end position="499"/>
    </location>
</feature>
<feature type="compositionally biased region" description="Basic residues" evidence="3">
    <location>
        <begin position="567"/>
        <end position="585"/>
    </location>
</feature>
<feature type="compositionally biased region" description="Low complexity" evidence="3">
    <location>
        <begin position="591"/>
        <end position="614"/>
    </location>
</feature>
<feature type="modified residue" description="Phosphoserine" evidence="8 10 11">
    <location>
        <position position="299"/>
    </location>
</feature>
<feature type="modified residue" description="Phosphoserine" evidence="8">
    <location>
        <position position="304"/>
    </location>
</feature>
<feature type="modified residue" description="Phosphoserine" evidence="11">
    <location>
        <position position="507"/>
    </location>
</feature>
<feature type="modified residue" description="Phosphoserine" evidence="7 11">
    <location>
        <position position="528"/>
    </location>
</feature>
<feature type="modified residue" description="Phosphoserine" evidence="1">
    <location>
        <position position="621"/>
    </location>
</feature>
<feature type="modified residue" description="Phosphothreonine" evidence="9">
    <location>
        <position position="698"/>
    </location>
</feature>
<feature type="modified residue" description="Phosphoserine" evidence="9">
    <location>
        <position position="699"/>
    </location>
</feature>
<feature type="modified residue" description="Phosphoserine" evidence="7 8 9">
    <location>
        <position position="703"/>
    </location>
</feature>
<feature type="glycosylation site" description="N-linked (GlcNAc...) asparagine" evidence="1">
    <location>
        <position position="29"/>
    </location>
</feature>
<feature type="splice variant" id="VSP_058134" description="In isoform 2." evidence="4">
    <original>LEAAEAAGGASPDSPPERGAGSAGPEQQQPPLEPDAERDAGPEQAQTSYRDLWSLRASLELHAAASDH</original>
    <variation>YFSVDGGARGGPVGPCPPSPPPRRPRERSPGPVDTRSPASSGKAPPRGGLTGATSPAWTRGGKQGETG</variation>
    <location>
        <begin position="386"/>
        <end position="453"/>
    </location>
</feature>
<feature type="splice variant" id="VSP_058135" description="In isoform 2." evidence="4">
    <location>
        <begin position="454"/>
        <end position="705"/>
    </location>
</feature>
<feature type="sequence conflict" description="In Ref. 2; AAH28156." evidence="5" ref="2">
    <original>S</original>
    <variation>L</variation>
    <location>
        <position position="256"/>
    </location>
</feature>
<feature type="sequence conflict" description="In Ref. 2; AAH28156." evidence="5" ref="2">
    <original>H</original>
    <variation>R</variation>
    <location>
        <position position="371"/>
    </location>
</feature>
<organism>
    <name type="scientific">Homo sapiens</name>
    <name type="common">Human</name>
    <dbReference type="NCBI Taxonomy" id="9606"/>
    <lineage>
        <taxon>Eukaryota</taxon>
        <taxon>Metazoa</taxon>
        <taxon>Chordata</taxon>
        <taxon>Craniata</taxon>
        <taxon>Vertebrata</taxon>
        <taxon>Euteleostomi</taxon>
        <taxon>Mammalia</taxon>
        <taxon>Eutheria</taxon>
        <taxon>Euarchontoglires</taxon>
        <taxon>Primates</taxon>
        <taxon>Haplorrhini</taxon>
        <taxon>Catarrhini</taxon>
        <taxon>Hominidae</taxon>
        <taxon>Homo</taxon>
    </lineage>
</organism>